<protein>
    <recommendedName>
        <fullName evidence="1">Proline--tRNA ligase</fullName>
        <ecNumber evidence="1">6.1.1.15</ecNumber>
    </recommendedName>
    <alternativeName>
        <fullName evidence="1">Prolyl-tRNA synthetase</fullName>
        <shortName evidence="1">ProRS</shortName>
    </alternativeName>
</protein>
<proteinExistence type="inferred from homology"/>
<comment type="function">
    <text evidence="1">Catalyzes the attachment of proline to tRNA(Pro) in a two-step reaction: proline is first activated by ATP to form Pro-AMP and then transferred to the acceptor end of tRNA(Pro). As ProRS can inadvertently accommodate and process non-cognate amino acids such as alanine and cysteine, to avoid such errors it has two additional distinct editing activities against alanine. One activity is designated as 'pretransfer' editing and involves the tRNA(Pro)-independent hydrolysis of activated Ala-AMP. The other activity is designated 'posttransfer' editing and involves deacylation of mischarged Ala-tRNA(Pro). The misacylated Cys-tRNA(Pro) is not edited by ProRS.</text>
</comment>
<comment type="catalytic activity">
    <reaction evidence="1">
        <text>tRNA(Pro) + L-proline + ATP = L-prolyl-tRNA(Pro) + AMP + diphosphate</text>
        <dbReference type="Rhea" id="RHEA:14305"/>
        <dbReference type="Rhea" id="RHEA-COMP:9700"/>
        <dbReference type="Rhea" id="RHEA-COMP:9702"/>
        <dbReference type="ChEBI" id="CHEBI:30616"/>
        <dbReference type="ChEBI" id="CHEBI:33019"/>
        <dbReference type="ChEBI" id="CHEBI:60039"/>
        <dbReference type="ChEBI" id="CHEBI:78442"/>
        <dbReference type="ChEBI" id="CHEBI:78532"/>
        <dbReference type="ChEBI" id="CHEBI:456215"/>
        <dbReference type="EC" id="6.1.1.15"/>
    </reaction>
</comment>
<comment type="subunit">
    <text evidence="1">Homodimer.</text>
</comment>
<comment type="subcellular location">
    <subcellularLocation>
        <location evidence="1">Cytoplasm</location>
    </subcellularLocation>
</comment>
<comment type="domain">
    <text evidence="1">Consists of three domains: the N-terminal catalytic domain, the editing domain and the C-terminal anticodon-binding domain.</text>
</comment>
<comment type="similarity">
    <text evidence="1">Belongs to the class-II aminoacyl-tRNA synthetase family. ProS type 1 subfamily.</text>
</comment>
<gene>
    <name evidence="1" type="primary">proS</name>
    <name type="ordered locus">Pput_1234</name>
</gene>
<organism>
    <name type="scientific">Pseudomonas putida (strain ATCC 700007 / DSM 6899 / JCM 31910 / BCRC 17059 / LMG 24140 / F1)</name>
    <dbReference type="NCBI Taxonomy" id="351746"/>
    <lineage>
        <taxon>Bacteria</taxon>
        <taxon>Pseudomonadati</taxon>
        <taxon>Pseudomonadota</taxon>
        <taxon>Gammaproteobacteria</taxon>
        <taxon>Pseudomonadales</taxon>
        <taxon>Pseudomonadaceae</taxon>
        <taxon>Pseudomonas</taxon>
    </lineage>
</organism>
<keyword id="KW-0030">Aminoacyl-tRNA synthetase</keyword>
<keyword id="KW-0067">ATP-binding</keyword>
<keyword id="KW-0963">Cytoplasm</keyword>
<keyword id="KW-0436">Ligase</keyword>
<keyword id="KW-0547">Nucleotide-binding</keyword>
<keyword id="KW-0648">Protein biosynthesis</keyword>
<name>SYP_PSEP1</name>
<evidence type="ECO:0000255" key="1">
    <source>
        <dbReference type="HAMAP-Rule" id="MF_01569"/>
    </source>
</evidence>
<reference key="1">
    <citation type="submission" date="2007-05" db="EMBL/GenBank/DDBJ databases">
        <title>Complete sequence of Pseudomonas putida F1.</title>
        <authorList>
            <consortium name="US DOE Joint Genome Institute"/>
            <person name="Copeland A."/>
            <person name="Lucas S."/>
            <person name="Lapidus A."/>
            <person name="Barry K."/>
            <person name="Detter J.C."/>
            <person name="Glavina del Rio T."/>
            <person name="Hammon N."/>
            <person name="Israni S."/>
            <person name="Dalin E."/>
            <person name="Tice H."/>
            <person name="Pitluck S."/>
            <person name="Chain P."/>
            <person name="Malfatti S."/>
            <person name="Shin M."/>
            <person name="Vergez L."/>
            <person name="Schmutz J."/>
            <person name="Larimer F."/>
            <person name="Land M."/>
            <person name="Hauser L."/>
            <person name="Kyrpides N."/>
            <person name="Lykidis A."/>
            <person name="Parales R."/>
            <person name="Richardson P."/>
        </authorList>
    </citation>
    <scope>NUCLEOTIDE SEQUENCE [LARGE SCALE GENOMIC DNA]</scope>
    <source>
        <strain>ATCC 700007 / DSM 6899 / JCM 31910 / BCRC 17059 / LMG 24140 / F1</strain>
    </source>
</reference>
<sequence length="571" mass="63622">MRTSQYLLATQKETPADAVVISHQLMLRAGMIRKLASGLYTWLPMGLRVMRKVEAVVREEMNAAGALEVLMPSIQPAELWQESGRWEQYGPELLRLKDRHQRDFCVGPTHEEVITDLARNELSSYKQLPLNLYQIQTKFRDEIRPRFGLMRGREFIMKDAYSFHADQASLQETYDRMHQAYSNVFTRLGLDFRPVQADTGSIGGSYSHEFHVLAESGEDDVIFSDSSDYAANIEKAEAIPRETVRPAPTEELRLVDTPNAKTIAQLVENHGLPIEKTVKTLIVRGAEEGKLIALIVRGDHELNEIKATKLEQVADPLVMATEAELRDAIGAGAGSLGPLNLPLEIIIDRSVALMSDFGIGANIDDKHYFGVNWERDLPVPQVADLRNVVEGDPSPDGQGTLVIKRGIEVGHIFQLGTKYSEALKCQVLGENGKPVVLSMGCYGIGVSRVVAAAIEQSYDDKGIIWNDALAPFQIALVPLRYETEVVREATDKLYAELTAAGFEVLLDDRDKKTSPGIKFADMELIGIPHRIVVSDRGLAEGNLEYKHRTEQDAQALPLNEVLTFLQARVRR</sequence>
<dbReference type="EC" id="6.1.1.15" evidence="1"/>
<dbReference type="EMBL" id="CP000712">
    <property type="protein sequence ID" value="ABQ77395.1"/>
    <property type="molecule type" value="Genomic_DNA"/>
</dbReference>
<dbReference type="SMR" id="A5VZT5"/>
<dbReference type="KEGG" id="ppf:Pput_1234"/>
<dbReference type="eggNOG" id="COG0442">
    <property type="taxonomic scope" value="Bacteria"/>
</dbReference>
<dbReference type="HOGENOM" id="CLU_016739_0_0_6"/>
<dbReference type="GO" id="GO:0005829">
    <property type="term" value="C:cytosol"/>
    <property type="evidence" value="ECO:0007669"/>
    <property type="project" value="TreeGrafter"/>
</dbReference>
<dbReference type="GO" id="GO:0002161">
    <property type="term" value="F:aminoacyl-tRNA deacylase activity"/>
    <property type="evidence" value="ECO:0007669"/>
    <property type="project" value="InterPro"/>
</dbReference>
<dbReference type="GO" id="GO:0005524">
    <property type="term" value="F:ATP binding"/>
    <property type="evidence" value="ECO:0007669"/>
    <property type="project" value="UniProtKB-UniRule"/>
</dbReference>
<dbReference type="GO" id="GO:0004827">
    <property type="term" value="F:proline-tRNA ligase activity"/>
    <property type="evidence" value="ECO:0007669"/>
    <property type="project" value="UniProtKB-UniRule"/>
</dbReference>
<dbReference type="GO" id="GO:0006433">
    <property type="term" value="P:prolyl-tRNA aminoacylation"/>
    <property type="evidence" value="ECO:0007669"/>
    <property type="project" value="UniProtKB-UniRule"/>
</dbReference>
<dbReference type="CDD" id="cd04334">
    <property type="entry name" value="ProRS-INS"/>
    <property type="match status" value="1"/>
</dbReference>
<dbReference type="CDD" id="cd00861">
    <property type="entry name" value="ProRS_anticodon_short"/>
    <property type="match status" value="1"/>
</dbReference>
<dbReference type="CDD" id="cd00779">
    <property type="entry name" value="ProRS_core_prok"/>
    <property type="match status" value="1"/>
</dbReference>
<dbReference type="FunFam" id="3.30.930.10:FF:000043">
    <property type="entry name" value="Proline--tRNA ligase"/>
    <property type="match status" value="1"/>
</dbReference>
<dbReference type="FunFam" id="3.30.930.10:FF:000097">
    <property type="entry name" value="Proline--tRNA ligase"/>
    <property type="match status" value="1"/>
</dbReference>
<dbReference type="FunFam" id="3.90.960.10:FF:000001">
    <property type="entry name" value="Proline--tRNA ligase"/>
    <property type="match status" value="1"/>
</dbReference>
<dbReference type="Gene3D" id="3.40.50.800">
    <property type="entry name" value="Anticodon-binding domain"/>
    <property type="match status" value="1"/>
</dbReference>
<dbReference type="Gene3D" id="3.30.930.10">
    <property type="entry name" value="Bira Bifunctional Protein, Domain 2"/>
    <property type="match status" value="2"/>
</dbReference>
<dbReference type="HAMAP" id="MF_01569">
    <property type="entry name" value="Pro_tRNA_synth_type1"/>
    <property type="match status" value="1"/>
</dbReference>
<dbReference type="InterPro" id="IPR002314">
    <property type="entry name" value="aa-tRNA-synt_IIb"/>
</dbReference>
<dbReference type="InterPro" id="IPR006195">
    <property type="entry name" value="aa-tRNA-synth_II"/>
</dbReference>
<dbReference type="InterPro" id="IPR045864">
    <property type="entry name" value="aa-tRNA-synth_II/BPL/LPL"/>
</dbReference>
<dbReference type="InterPro" id="IPR004154">
    <property type="entry name" value="Anticodon-bd"/>
</dbReference>
<dbReference type="InterPro" id="IPR036621">
    <property type="entry name" value="Anticodon-bd_dom_sf"/>
</dbReference>
<dbReference type="InterPro" id="IPR002316">
    <property type="entry name" value="Pro-tRNA-ligase_IIa"/>
</dbReference>
<dbReference type="InterPro" id="IPR004500">
    <property type="entry name" value="Pro-tRNA-synth_IIa_bac-type"/>
</dbReference>
<dbReference type="InterPro" id="IPR023717">
    <property type="entry name" value="Pro-tRNA-Synthase_IIa_type1"/>
</dbReference>
<dbReference type="InterPro" id="IPR050062">
    <property type="entry name" value="Pro-tRNA_synthetase"/>
</dbReference>
<dbReference type="InterPro" id="IPR044140">
    <property type="entry name" value="ProRS_anticodon_short"/>
</dbReference>
<dbReference type="InterPro" id="IPR033730">
    <property type="entry name" value="ProRS_core_prok"/>
</dbReference>
<dbReference type="InterPro" id="IPR036754">
    <property type="entry name" value="YbaK/aa-tRNA-synt-asso_dom_sf"/>
</dbReference>
<dbReference type="InterPro" id="IPR007214">
    <property type="entry name" value="YbaK/aa-tRNA-synth-assoc-dom"/>
</dbReference>
<dbReference type="NCBIfam" id="NF006625">
    <property type="entry name" value="PRK09194.1"/>
    <property type="match status" value="1"/>
</dbReference>
<dbReference type="NCBIfam" id="TIGR00409">
    <property type="entry name" value="proS_fam_II"/>
    <property type="match status" value="1"/>
</dbReference>
<dbReference type="PANTHER" id="PTHR42753">
    <property type="entry name" value="MITOCHONDRIAL RIBOSOME PROTEIN L39/PROLYL-TRNA LIGASE FAMILY MEMBER"/>
    <property type="match status" value="1"/>
</dbReference>
<dbReference type="PANTHER" id="PTHR42753:SF2">
    <property type="entry name" value="PROLINE--TRNA LIGASE"/>
    <property type="match status" value="1"/>
</dbReference>
<dbReference type="Pfam" id="PF03129">
    <property type="entry name" value="HGTP_anticodon"/>
    <property type="match status" value="1"/>
</dbReference>
<dbReference type="Pfam" id="PF00587">
    <property type="entry name" value="tRNA-synt_2b"/>
    <property type="match status" value="1"/>
</dbReference>
<dbReference type="Pfam" id="PF04073">
    <property type="entry name" value="tRNA_edit"/>
    <property type="match status" value="1"/>
</dbReference>
<dbReference type="PIRSF" id="PIRSF001535">
    <property type="entry name" value="ProRS_1"/>
    <property type="match status" value="1"/>
</dbReference>
<dbReference type="PRINTS" id="PR01046">
    <property type="entry name" value="TRNASYNTHPRO"/>
</dbReference>
<dbReference type="SUPFAM" id="SSF52954">
    <property type="entry name" value="Class II aaRS ABD-related"/>
    <property type="match status" value="1"/>
</dbReference>
<dbReference type="SUPFAM" id="SSF55681">
    <property type="entry name" value="Class II aaRS and biotin synthetases"/>
    <property type="match status" value="1"/>
</dbReference>
<dbReference type="SUPFAM" id="SSF55826">
    <property type="entry name" value="YbaK/ProRS associated domain"/>
    <property type="match status" value="1"/>
</dbReference>
<dbReference type="PROSITE" id="PS50862">
    <property type="entry name" value="AA_TRNA_LIGASE_II"/>
    <property type="match status" value="1"/>
</dbReference>
<feature type="chain" id="PRO_1000069156" description="Proline--tRNA ligase">
    <location>
        <begin position="1"/>
        <end position="571"/>
    </location>
</feature>
<accession>A5VZT5</accession>